<accession>C4K3Q5</accession>
<gene>
    <name evidence="1" type="primary">rpmF</name>
    <name type="ordered locus">HDEF_0444</name>
</gene>
<name>RL32_HAMD5</name>
<proteinExistence type="inferred from homology"/>
<reference key="1">
    <citation type="journal article" date="2009" name="Proc. Natl. Acad. Sci. U.S.A.">
        <title>Hamiltonella defensa, genome evolution of protective bacterial endosymbiont from pathogenic ancestors.</title>
        <authorList>
            <person name="Degnan P.H."/>
            <person name="Yu Y."/>
            <person name="Sisneros N."/>
            <person name="Wing R.A."/>
            <person name="Moran N.A."/>
        </authorList>
    </citation>
    <scope>NUCLEOTIDE SEQUENCE [LARGE SCALE GENOMIC DNA]</scope>
    <source>
        <strain>5AT</strain>
    </source>
</reference>
<organism>
    <name type="scientific">Hamiltonella defensa subsp. Acyrthosiphon pisum (strain 5AT)</name>
    <dbReference type="NCBI Taxonomy" id="572265"/>
    <lineage>
        <taxon>Bacteria</taxon>
        <taxon>Pseudomonadati</taxon>
        <taxon>Pseudomonadota</taxon>
        <taxon>Gammaproteobacteria</taxon>
        <taxon>Enterobacterales</taxon>
        <taxon>Enterobacteriaceae</taxon>
        <taxon>aphid secondary symbionts</taxon>
        <taxon>Candidatus Hamiltonella</taxon>
    </lineage>
</organism>
<sequence>MAVQKNKPTRSKRGMRRSHDALTTALLSVDKTSGENHLRHHITTDGYYRGRKVINR</sequence>
<keyword id="KW-0687">Ribonucleoprotein</keyword>
<keyword id="KW-0689">Ribosomal protein</keyword>
<dbReference type="EMBL" id="CP001277">
    <property type="protein sequence ID" value="ACQ67198.1"/>
    <property type="molecule type" value="Genomic_DNA"/>
</dbReference>
<dbReference type="RefSeq" id="WP_012738155.1">
    <property type="nucleotide sequence ID" value="NC_012751.1"/>
</dbReference>
<dbReference type="SMR" id="C4K3Q5"/>
<dbReference type="STRING" id="572265.HDEF_0444"/>
<dbReference type="GeneID" id="66260339"/>
<dbReference type="KEGG" id="hde:HDEF_0444"/>
<dbReference type="eggNOG" id="COG0333">
    <property type="taxonomic scope" value="Bacteria"/>
</dbReference>
<dbReference type="HOGENOM" id="CLU_129084_2_1_6"/>
<dbReference type="Proteomes" id="UP000002334">
    <property type="component" value="Chromosome"/>
</dbReference>
<dbReference type="GO" id="GO:0015934">
    <property type="term" value="C:large ribosomal subunit"/>
    <property type="evidence" value="ECO:0007669"/>
    <property type="project" value="InterPro"/>
</dbReference>
<dbReference type="GO" id="GO:0003735">
    <property type="term" value="F:structural constituent of ribosome"/>
    <property type="evidence" value="ECO:0007669"/>
    <property type="project" value="InterPro"/>
</dbReference>
<dbReference type="GO" id="GO:0006412">
    <property type="term" value="P:translation"/>
    <property type="evidence" value="ECO:0007669"/>
    <property type="project" value="UniProtKB-UniRule"/>
</dbReference>
<dbReference type="HAMAP" id="MF_00340">
    <property type="entry name" value="Ribosomal_bL32"/>
    <property type="match status" value="1"/>
</dbReference>
<dbReference type="InterPro" id="IPR002677">
    <property type="entry name" value="Ribosomal_bL32"/>
</dbReference>
<dbReference type="InterPro" id="IPR044957">
    <property type="entry name" value="Ribosomal_bL32_bact"/>
</dbReference>
<dbReference type="InterPro" id="IPR011332">
    <property type="entry name" value="Ribosomal_zn-bd"/>
</dbReference>
<dbReference type="NCBIfam" id="TIGR01031">
    <property type="entry name" value="rpmF_bact"/>
    <property type="match status" value="1"/>
</dbReference>
<dbReference type="PANTHER" id="PTHR35534">
    <property type="entry name" value="50S RIBOSOMAL PROTEIN L32"/>
    <property type="match status" value="1"/>
</dbReference>
<dbReference type="PANTHER" id="PTHR35534:SF1">
    <property type="entry name" value="LARGE RIBOSOMAL SUBUNIT PROTEIN BL32"/>
    <property type="match status" value="1"/>
</dbReference>
<dbReference type="Pfam" id="PF01783">
    <property type="entry name" value="Ribosomal_L32p"/>
    <property type="match status" value="1"/>
</dbReference>
<dbReference type="SUPFAM" id="SSF57829">
    <property type="entry name" value="Zn-binding ribosomal proteins"/>
    <property type="match status" value="1"/>
</dbReference>
<feature type="chain" id="PRO_1000205265" description="Large ribosomal subunit protein bL32">
    <location>
        <begin position="1"/>
        <end position="56"/>
    </location>
</feature>
<feature type="region of interest" description="Disordered" evidence="2">
    <location>
        <begin position="1"/>
        <end position="21"/>
    </location>
</feature>
<feature type="compositionally biased region" description="Basic residues" evidence="2">
    <location>
        <begin position="7"/>
        <end position="16"/>
    </location>
</feature>
<protein>
    <recommendedName>
        <fullName evidence="1">Large ribosomal subunit protein bL32</fullName>
    </recommendedName>
    <alternativeName>
        <fullName evidence="3">50S ribosomal protein L32</fullName>
    </alternativeName>
</protein>
<evidence type="ECO:0000255" key="1">
    <source>
        <dbReference type="HAMAP-Rule" id="MF_00340"/>
    </source>
</evidence>
<evidence type="ECO:0000256" key="2">
    <source>
        <dbReference type="SAM" id="MobiDB-lite"/>
    </source>
</evidence>
<evidence type="ECO:0000305" key="3"/>
<comment type="similarity">
    <text evidence="1">Belongs to the bacterial ribosomal protein bL32 family.</text>
</comment>